<name>RL2_BRUA2</name>
<reference key="1">
    <citation type="journal article" date="2005" name="Infect. Immun.">
        <title>Whole-genome analyses of speciation events in pathogenic Brucellae.</title>
        <authorList>
            <person name="Chain P.S."/>
            <person name="Comerci D.J."/>
            <person name="Tolmasky M.E."/>
            <person name="Larimer F.W."/>
            <person name="Malfatti S.A."/>
            <person name="Vergez L.M."/>
            <person name="Aguero F."/>
            <person name="Land M.L."/>
            <person name="Ugalde R.A."/>
            <person name="Garcia E."/>
        </authorList>
    </citation>
    <scope>NUCLEOTIDE SEQUENCE [LARGE SCALE GENOMIC DNA]</scope>
    <source>
        <strain>2308</strain>
    </source>
</reference>
<dbReference type="EMBL" id="AM040264">
    <property type="protein sequence ID" value="CAJ11208.1"/>
    <property type="molecule type" value="Genomic_DNA"/>
</dbReference>
<dbReference type="RefSeq" id="WP_002964359.1">
    <property type="nucleotide sequence ID" value="NZ_KN046823.1"/>
</dbReference>
<dbReference type="SMR" id="Q2YM06"/>
<dbReference type="STRING" id="359391.BAB1_1252"/>
<dbReference type="GeneID" id="97533527"/>
<dbReference type="KEGG" id="bmf:BAB1_1252"/>
<dbReference type="PATRIC" id="fig|359391.11.peg.152"/>
<dbReference type="HOGENOM" id="CLU_036235_2_1_5"/>
<dbReference type="PhylomeDB" id="Q2YM06"/>
<dbReference type="Proteomes" id="UP000002719">
    <property type="component" value="Chromosome I"/>
</dbReference>
<dbReference type="GO" id="GO:0015934">
    <property type="term" value="C:large ribosomal subunit"/>
    <property type="evidence" value="ECO:0007669"/>
    <property type="project" value="InterPro"/>
</dbReference>
<dbReference type="GO" id="GO:0019843">
    <property type="term" value="F:rRNA binding"/>
    <property type="evidence" value="ECO:0007669"/>
    <property type="project" value="UniProtKB-UniRule"/>
</dbReference>
<dbReference type="GO" id="GO:0003735">
    <property type="term" value="F:structural constituent of ribosome"/>
    <property type="evidence" value="ECO:0007669"/>
    <property type="project" value="InterPro"/>
</dbReference>
<dbReference type="GO" id="GO:0016740">
    <property type="term" value="F:transferase activity"/>
    <property type="evidence" value="ECO:0007669"/>
    <property type="project" value="InterPro"/>
</dbReference>
<dbReference type="GO" id="GO:0002181">
    <property type="term" value="P:cytoplasmic translation"/>
    <property type="evidence" value="ECO:0007669"/>
    <property type="project" value="TreeGrafter"/>
</dbReference>
<dbReference type="FunFam" id="2.30.30.30:FF:000055">
    <property type="entry name" value="50S ribosomal protein L2"/>
    <property type="match status" value="1"/>
</dbReference>
<dbReference type="FunFam" id="2.40.50.140:FF:000003">
    <property type="entry name" value="50S ribosomal protein L2"/>
    <property type="match status" value="1"/>
</dbReference>
<dbReference type="FunFam" id="4.10.950.10:FF:000001">
    <property type="entry name" value="50S ribosomal protein L2"/>
    <property type="match status" value="1"/>
</dbReference>
<dbReference type="Gene3D" id="2.30.30.30">
    <property type="match status" value="1"/>
</dbReference>
<dbReference type="Gene3D" id="2.40.50.140">
    <property type="entry name" value="Nucleic acid-binding proteins"/>
    <property type="match status" value="1"/>
</dbReference>
<dbReference type="Gene3D" id="4.10.950.10">
    <property type="entry name" value="Ribosomal protein L2, domain 3"/>
    <property type="match status" value="1"/>
</dbReference>
<dbReference type="HAMAP" id="MF_01320_B">
    <property type="entry name" value="Ribosomal_uL2_B"/>
    <property type="match status" value="1"/>
</dbReference>
<dbReference type="InterPro" id="IPR012340">
    <property type="entry name" value="NA-bd_OB-fold"/>
</dbReference>
<dbReference type="InterPro" id="IPR014722">
    <property type="entry name" value="Rib_uL2_dom2"/>
</dbReference>
<dbReference type="InterPro" id="IPR002171">
    <property type="entry name" value="Ribosomal_uL2"/>
</dbReference>
<dbReference type="InterPro" id="IPR005880">
    <property type="entry name" value="Ribosomal_uL2_bac/org-type"/>
</dbReference>
<dbReference type="InterPro" id="IPR022669">
    <property type="entry name" value="Ribosomal_uL2_C"/>
</dbReference>
<dbReference type="InterPro" id="IPR022671">
    <property type="entry name" value="Ribosomal_uL2_CS"/>
</dbReference>
<dbReference type="InterPro" id="IPR014726">
    <property type="entry name" value="Ribosomal_uL2_dom3"/>
</dbReference>
<dbReference type="InterPro" id="IPR022666">
    <property type="entry name" value="Ribosomal_uL2_RNA-bd_dom"/>
</dbReference>
<dbReference type="InterPro" id="IPR008991">
    <property type="entry name" value="Translation_prot_SH3-like_sf"/>
</dbReference>
<dbReference type="NCBIfam" id="TIGR01171">
    <property type="entry name" value="rplB_bact"/>
    <property type="match status" value="1"/>
</dbReference>
<dbReference type="PANTHER" id="PTHR13691:SF5">
    <property type="entry name" value="LARGE RIBOSOMAL SUBUNIT PROTEIN UL2M"/>
    <property type="match status" value="1"/>
</dbReference>
<dbReference type="PANTHER" id="PTHR13691">
    <property type="entry name" value="RIBOSOMAL PROTEIN L2"/>
    <property type="match status" value="1"/>
</dbReference>
<dbReference type="Pfam" id="PF00181">
    <property type="entry name" value="Ribosomal_L2"/>
    <property type="match status" value="1"/>
</dbReference>
<dbReference type="Pfam" id="PF03947">
    <property type="entry name" value="Ribosomal_L2_C"/>
    <property type="match status" value="1"/>
</dbReference>
<dbReference type="PIRSF" id="PIRSF002158">
    <property type="entry name" value="Ribosomal_L2"/>
    <property type="match status" value="1"/>
</dbReference>
<dbReference type="SMART" id="SM01383">
    <property type="entry name" value="Ribosomal_L2"/>
    <property type="match status" value="1"/>
</dbReference>
<dbReference type="SMART" id="SM01382">
    <property type="entry name" value="Ribosomal_L2_C"/>
    <property type="match status" value="1"/>
</dbReference>
<dbReference type="SUPFAM" id="SSF50249">
    <property type="entry name" value="Nucleic acid-binding proteins"/>
    <property type="match status" value="1"/>
</dbReference>
<dbReference type="SUPFAM" id="SSF50104">
    <property type="entry name" value="Translation proteins SH3-like domain"/>
    <property type="match status" value="1"/>
</dbReference>
<dbReference type="PROSITE" id="PS00467">
    <property type="entry name" value="RIBOSOMAL_L2"/>
    <property type="match status" value="1"/>
</dbReference>
<sequence length="277" mass="30168">MALKHFNPITPGQRQLVIVDRSELYKGKPVKSLTEGLSKKGGRNNTGRITVRFQGGGHKRSYRFIDFKRRKLDVVGTVERLEYDPNRTAFIALIRYTDGELAYILAPQRLAVGDQVVAGNSVDVKPGNAMPLSSMPVGTIIHNVELKPGKGGQIARSAGTYAQLVGRDQGMAILRLNSGEQRLVSGACFASVGAVSNPDHGNINDGKAGRSVWRGKRPHVRGVAMNPVDHPHGGGEGRTSGGRHPVTPWGKPTKGKKTRSNKATDKFIMRSRHQRKK</sequence>
<organism>
    <name type="scientific">Brucella abortus (strain 2308)</name>
    <dbReference type="NCBI Taxonomy" id="359391"/>
    <lineage>
        <taxon>Bacteria</taxon>
        <taxon>Pseudomonadati</taxon>
        <taxon>Pseudomonadota</taxon>
        <taxon>Alphaproteobacteria</taxon>
        <taxon>Hyphomicrobiales</taxon>
        <taxon>Brucellaceae</taxon>
        <taxon>Brucella/Ochrobactrum group</taxon>
        <taxon>Brucella</taxon>
    </lineage>
</organism>
<protein>
    <recommendedName>
        <fullName evidence="1">Large ribosomal subunit protein uL2</fullName>
    </recommendedName>
    <alternativeName>
        <fullName evidence="3">50S ribosomal protein L2</fullName>
    </alternativeName>
</protein>
<accession>Q2YM06</accession>
<keyword id="KW-1185">Reference proteome</keyword>
<keyword id="KW-0687">Ribonucleoprotein</keyword>
<keyword id="KW-0689">Ribosomal protein</keyword>
<keyword id="KW-0694">RNA-binding</keyword>
<keyword id="KW-0699">rRNA-binding</keyword>
<gene>
    <name evidence="1" type="primary">rplB</name>
    <name type="ordered locus">BAB1_1252</name>
</gene>
<proteinExistence type="inferred from homology"/>
<comment type="function">
    <text evidence="1">One of the primary rRNA binding proteins. Required for association of the 30S and 50S subunits to form the 70S ribosome, for tRNA binding and peptide bond formation. It has been suggested to have peptidyltransferase activity; this is somewhat controversial. Makes several contacts with the 16S rRNA in the 70S ribosome.</text>
</comment>
<comment type="subunit">
    <text evidence="1">Part of the 50S ribosomal subunit. Forms a bridge to the 30S subunit in the 70S ribosome.</text>
</comment>
<comment type="similarity">
    <text evidence="1">Belongs to the universal ribosomal protein uL2 family.</text>
</comment>
<feature type="chain" id="PRO_0000237163" description="Large ribosomal subunit protein uL2">
    <location>
        <begin position="1"/>
        <end position="277"/>
    </location>
</feature>
<feature type="region of interest" description="Disordered" evidence="2">
    <location>
        <begin position="222"/>
        <end position="277"/>
    </location>
</feature>
<evidence type="ECO:0000255" key="1">
    <source>
        <dbReference type="HAMAP-Rule" id="MF_01320"/>
    </source>
</evidence>
<evidence type="ECO:0000256" key="2">
    <source>
        <dbReference type="SAM" id="MobiDB-lite"/>
    </source>
</evidence>
<evidence type="ECO:0000305" key="3"/>